<keyword id="KW-0028">Amino-acid biosynthesis</keyword>
<keyword id="KW-0067">ATP-binding</keyword>
<keyword id="KW-0963">Cytoplasm</keyword>
<keyword id="KW-0328">Glycosyltransferase</keyword>
<keyword id="KW-0368">Histidine biosynthesis</keyword>
<keyword id="KW-0460">Magnesium</keyword>
<keyword id="KW-0479">Metal-binding</keyword>
<keyword id="KW-0547">Nucleotide-binding</keyword>
<keyword id="KW-1185">Reference proteome</keyword>
<keyword id="KW-0808">Transferase</keyword>
<name>HIS1_YERPE</name>
<gene>
    <name evidence="1" type="primary">hisG</name>
    <name type="ordered locus">YPO1549</name>
    <name type="ordered locus">y2620</name>
    <name type="ordered locus">YP_1438</name>
</gene>
<evidence type="ECO:0000255" key="1">
    <source>
        <dbReference type="HAMAP-Rule" id="MF_00079"/>
    </source>
</evidence>
<organism>
    <name type="scientific">Yersinia pestis</name>
    <dbReference type="NCBI Taxonomy" id="632"/>
    <lineage>
        <taxon>Bacteria</taxon>
        <taxon>Pseudomonadati</taxon>
        <taxon>Pseudomonadota</taxon>
        <taxon>Gammaproteobacteria</taxon>
        <taxon>Enterobacterales</taxon>
        <taxon>Yersiniaceae</taxon>
        <taxon>Yersinia</taxon>
    </lineage>
</organism>
<proteinExistence type="inferred from homology"/>
<accession>Q8ZFX4</accession>
<accession>Q0WGM3</accession>
<protein>
    <recommendedName>
        <fullName evidence="1">ATP phosphoribosyltransferase</fullName>
        <shortName evidence="1">ATP-PRT</shortName>
        <shortName evidence="1">ATP-PRTase</shortName>
        <ecNumber evidence="1">2.4.2.17</ecNumber>
    </recommendedName>
</protein>
<sequence length="299" mass="33456">MLDKTRLRIAMQKSGRLSDESQELLSRCGIKINLQQQRLIAFAENMPIDILRVRDDDIPGLVMDGVVDLGIIGENVLEEELLNRRAQGDDPRYFTLRRLDFGGCRLSLAAPLDAEYTGPQCLQDTRIATSYPHILKQYLDKQGVRFKSCLLNGSVEVAPRAGLADAICDLVSTGATLEANGLREVEVIYRSKACLIQRDGEMSVDKQQLIDRLMTRIQGVIQARESKYIMMHAPSERLDEIITLLPGAERPTILPLAGDKSRVAMHMVSSETLFWETMEKLKALGASSILVLPIEKMME</sequence>
<reference key="1">
    <citation type="journal article" date="2001" name="Nature">
        <title>Genome sequence of Yersinia pestis, the causative agent of plague.</title>
        <authorList>
            <person name="Parkhill J."/>
            <person name="Wren B.W."/>
            <person name="Thomson N.R."/>
            <person name="Titball R.W."/>
            <person name="Holden M.T.G."/>
            <person name="Prentice M.B."/>
            <person name="Sebaihia M."/>
            <person name="James K.D."/>
            <person name="Churcher C.M."/>
            <person name="Mungall K.L."/>
            <person name="Baker S."/>
            <person name="Basham D."/>
            <person name="Bentley S.D."/>
            <person name="Brooks K."/>
            <person name="Cerdeno-Tarraga A.-M."/>
            <person name="Chillingworth T."/>
            <person name="Cronin A."/>
            <person name="Davies R.M."/>
            <person name="Davis P."/>
            <person name="Dougan G."/>
            <person name="Feltwell T."/>
            <person name="Hamlin N."/>
            <person name="Holroyd S."/>
            <person name="Jagels K."/>
            <person name="Karlyshev A.V."/>
            <person name="Leather S."/>
            <person name="Moule S."/>
            <person name="Oyston P.C.F."/>
            <person name="Quail M.A."/>
            <person name="Rutherford K.M."/>
            <person name="Simmonds M."/>
            <person name="Skelton J."/>
            <person name="Stevens K."/>
            <person name="Whitehead S."/>
            <person name="Barrell B.G."/>
        </authorList>
    </citation>
    <scope>NUCLEOTIDE SEQUENCE [LARGE SCALE GENOMIC DNA]</scope>
    <source>
        <strain>CO-92 / Biovar Orientalis</strain>
    </source>
</reference>
<reference key="2">
    <citation type="journal article" date="2002" name="J. Bacteriol.">
        <title>Genome sequence of Yersinia pestis KIM.</title>
        <authorList>
            <person name="Deng W."/>
            <person name="Burland V."/>
            <person name="Plunkett G. III"/>
            <person name="Boutin A."/>
            <person name="Mayhew G.F."/>
            <person name="Liss P."/>
            <person name="Perna N.T."/>
            <person name="Rose D.J."/>
            <person name="Mau B."/>
            <person name="Zhou S."/>
            <person name="Schwartz D.C."/>
            <person name="Fetherston J.D."/>
            <person name="Lindler L.E."/>
            <person name="Brubaker R.R."/>
            <person name="Plano G.V."/>
            <person name="Straley S.C."/>
            <person name="McDonough K.A."/>
            <person name="Nilles M.L."/>
            <person name="Matson J.S."/>
            <person name="Blattner F.R."/>
            <person name="Perry R.D."/>
        </authorList>
    </citation>
    <scope>NUCLEOTIDE SEQUENCE [LARGE SCALE GENOMIC DNA]</scope>
    <source>
        <strain>KIM10+ / Biovar Mediaevalis</strain>
    </source>
</reference>
<reference key="3">
    <citation type="journal article" date="2004" name="DNA Res.">
        <title>Complete genome sequence of Yersinia pestis strain 91001, an isolate avirulent to humans.</title>
        <authorList>
            <person name="Song Y."/>
            <person name="Tong Z."/>
            <person name="Wang J."/>
            <person name="Wang L."/>
            <person name="Guo Z."/>
            <person name="Han Y."/>
            <person name="Zhang J."/>
            <person name="Pei D."/>
            <person name="Zhou D."/>
            <person name="Qin H."/>
            <person name="Pang X."/>
            <person name="Han Y."/>
            <person name="Zhai J."/>
            <person name="Li M."/>
            <person name="Cui B."/>
            <person name="Qi Z."/>
            <person name="Jin L."/>
            <person name="Dai R."/>
            <person name="Chen F."/>
            <person name="Li S."/>
            <person name="Ye C."/>
            <person name="Du Z."/>
            <person name="Lin W."/>
            <person name="Wang J."/>
            <person name="Yu J."/>
            <person name="Yang H."/>
            <person name="Wang J."/>
            <person name="Huang P."/>
            <person name="Yang R."/>
        </authorList>
    </citation>
    <scope>NUCLEOTIDE SEQUENCE [LARGE SCALE GENOMIC DNA]</scope>
    <source>
        <strain>91001 / Biovar Mediaevalis</strain>
    </source>
</reference>
<dbReference type="EC" id="2.4.2.17" evidence="1"/>
<dbReference type="EMBL" id="AL590842">
    <property type="protein sequence ID" value="CAL20195.1"/>
    <property type="molecule type" value="Genomic_DNA"/>
</dbReference>
<dbReference type="EMBL" id="AE009952">
    <property type="protein sequence ID" value="AAM86174.1"/>
    <property type="molecule type" value="Genomic_DNA"/>
</dbReference>
<dbReference type="EMBL" id="AE017042">
    <property type="protein sequence ID" value="AAS61679.1"/>
    <property type="molecule type" value="Genomic_DNA"/>
</dbReference>
<dbReference type="PIR" id="AI0188">
    <property type="entry name" value="AI0188"/>
</dbReference>
<dbReference type="RefSeq" id="WP_002211896.1">
    <property type="nucleotide sequence ID" value="NZ_WUCM01000031.1"/>
</dbReference>
<dbReference type="RefSeq" id="YP_002346565.1">
    <property type="nucleotide sequence ID" value="NC_003143.1"/>
</dbReference>
<dbReference type="SMR" id="Q8ZFX4"/>
<dbReference type="STRING" id="214092.YPO1549"/>
<dbReference type="PaxDb" id="214092-YPO1549"/>
<dbReference type="DNASU" id="1147567"/>
<dbReference type="EnsemblBacteria" id="AAS61679">
    <property type="protein sequence ID" value="AAS61679"/>
    <property type="gene ID" value="YP_1438"/>
</dbReference>
<dbReference type="GeneID" id="96665168"/>
<dbReference type="KEGG" id="ype:YPO1549"/>
<dbReference type="KEGG" id="ypk:y2620"/>
<dbReference type="KEGG" id="ypm:YP_1438"/>
<dbReference type="PATRIC" id="fig|214092.21.peg.1886"/>
<dbReference type="eggNOG" id="COG0040">
    <property type="taxonomic scope" value="Bacteria"/>
</dbReference>
<dbReference type="HOGENOM" id="CLU_038115_1_0_6"/>
<dbReference type="OMA" id="YVMMDYD"/>
<dbReference type="OrthoDB" id="9801867at2"/>
<dbReference type="UniPathway" id="UPA00031">
    <property type="reaction ID" value="UER00006"/>
</dbReference>
<dbReference type="Proteomes" id="UP000000815">
    <property type="component" value="Chromosome"/>
</dbReference>
<dbReference type="Proteomes" id="UP000001019">
    <property type="component" value="Chromosome"/>
</dbReference>
<dbReference type="Proteomes" id="UP000002490">
    <property type="component" value="Chromosome"/>
</dbReference>
<dbReference type="GO" id="GO:0005737">
    <property type="term" value="C:cytoplasm"/>
    <property type="evidence" value="ECO:0007669"/>
    <property type="project" value="UniProtKB-SubCell"/>
</dbReference>
<dbReference type="GO" id="GO:0005524">
    <property type="term" value="F:ATP binding"/>
    <property type="evidence" value="ECO:0007669"/>
    <property type="project" value="UniProtKB-KW"/>
</dbReference>
<dbReference type="GO" id="GO:0003879">
    <property type="term" value="F:ATP phosphoribosyltransferase activity"/>
    <property type="evidence" value="ECO:0000318"/>
    <property type="project" value="GO_Central"/>
</dbReference>
<dbReference type="GO" id="GO:0000287">
    <property type="term" value="F:magnesium ion binding"/>
    <property type="evidence" value="ECO:0007669"/>
    <property type="project" value="UniProtKB-UniRule"/>
</dbReference>
<dbReference type="GO" id="GO:0000105">
    <property type="term" value="P:L-histidine biosynthetic process"/>
    <property type="evidence" value="ECO:0000318"/>
    <property type="project" value="GO_Central"/>
</dbReference>
<dbReference type="CDD" id="cd13592">
    <property type="entry name" value="PBP2_HisGL2"/>
    <property type="match status" value="1"/>
</dbReference>
<dbReference type="FunFam" id="3.30.70.120:FF:000002">
    <property type="entry name" value="ATP phosphoribosyltransferase"/>
    <property type="match status" value="1"/>
</dbReference>
<dbReference type="FunFam" id="3.40.190.10:FF:000008">
    <property type="entry name" value="ATP phosphoribosyltransferase"/>
    <property type="match status" value="1"/>
</dbReference>
<dbReference type="Gene3D" id="3.30.70.120">
    <property type="match status" value="1"/>
</dbReference>
<dbReference type="Gene3D" id="3.40.190.10">
    <property type="entry name" value="Periplasmic binding protein-like II"/>
    <property type="match status" value="2"/>
</dbReference>
<dbReference type="HAMAP" id="MF_00079">
    <property type="entry name" value="HisG_Long"/>
    <property type="match status" value="1"/>
</dbReference>
<dbReference type="InterPro" id="IPR020621">
    <property type="entry name" value="ATP-PRT_HisG_long"/>
</dbReference>
<dbReference type="InterPro" id="IPR013820">
    <property type="entry name" value="ATP_PRibTrfase_cat"/>
</dbReference>
<dbReference type="InterPro" id="IPR018198">
    <property type="entry name" value="ATP_PRibTrfase_CS"/>
</dbReference>
<dbReference type="InterPro" id="IPR001348">
    <property type="entry name" value="ATP_PRibTrfase_HisG"/>
</dbReference>
<dbReference type="InterPro" id="IPR013115">
    <property type="entry name" value="HisG_C"/>
</dbReference>
<dbReference type="InterPro" id="IPR011322">
    <property type="entry name" value="N-reg_PII-like_a/b"/>
</dbReference>
<dbReference type="InterPro" id="IPR015867">
    <property type="entry name" value="N-reg_PII/ATP_PRibTrfase_C"/>
</dbReference>
<dbReference type="NCBIfam" id="TIGR00070">
    <property type="entry name" value="hisG"/>
    <property type="match status" value="1"/>
</dbReference>
<dbReference type="NCBIfam" id="TIGR03455">
    <property type="entry name" value="HisG_C-term"/>
    <property type="match status" value="1"/>
</dbReference>
<dbReference type="PANTHER" id="PTHR21403:SF8">
    <property type="entry name" value="ATP PHOSPHORIBOSYLTRANSFERASE"/>
    <property type="match status" value="1"/>
</dbReference>
<dbReference type="PANTHER" id="PTHR21403">
    <property type="entry name" value="ATP PHOSPHORIBOSYLTRANSFERASE ATP-PRTASE"/>
    <property type="match status" value="1"/>
</dbReference>
<dbReference type="Pfam" id="PF01634">
    <property type="entry name" value="HisG"/>
    <property type="match status" value="1"/>
</dbReference>
<dbReference type="Pfam" id="PF08029">
    <property type="entry name" value="HisG_C"/>
    <property type="match status" value="1"/>
</dbReference>
<dbReference type="SUPFAM" id="SSF54913">
    <property type="entry name" value="GlnB-like"/>
    <property type="match status" value="1"/>
</dbReference>
<dbReference type="SUPFAM" id="SSF53850">
    <property type="entry name" value="Periplasmic binding protein-like II"/>
    <property type="match status" value="1"/>
</dbReference>
<dbReference type="PROSITE" id="PS01316">
    <property type="entry name" value="ATP_P_PHORIBOSYLTR"/>
    <property type="match status" value="1"/>
</dbReference>
<comment type="function">
    <text evidence="1">Catalyzes the condensation of ATP and 5-phosphoribose 1-diphosphate to form N'-(5'-phosphoribosyl)-ATP (PR-ATP). Has a crucial role in the pathway because the rate of histidine biosynthesis seems to be controlled primarily by regulation of HisG enzymatic activity.</text>
</comment>
<comment type="catalytic activity">
    <reaction evidence="1">
        <text>1-(5-phospho-beta-D-ribosyl)-ATP + diphosphate = 5-phospho-alpha-D-ribose 1-diphosphate + ATP</text>
        <dbReference type="Rhea" id="RHEA:18473"/>
        <dbReference type="ChEBI" id="CHEBI:30616"/>
        <dbReference type="ChEBI" id="CHEBI:33019"/>
        <dbReference type="ChEBI" id="CHEBI:58017"/>
        <dbReference type="ChEBI" id="CHEBI:73183"/>
        <dbReference type="EC" id="2.4.2.17"/>
    </reaction>
</comment>
<comment type="cofactor">
    <cofactor evidence="1">
        <name>Mg(2+)</name>
        <dbReference type="ChEBI" id="CHEBI:18420"/>
    </cofactor>
</comment>
<comment type="activity regulation">
    <text evidence="1">Feedback inhibited by histidine.</text>
</comment>
<comment type="pathway">
    <text evidence="1">Amino-acid biosynthesis; L-histidine biosynthesis; L-histidine from 5-phospho-alpha-D-ribose 1-diphosphate: step 1/9.</text>
</comment>
<comment type="subunit">
    <text evidence="1">Equilibrium between an active dimeric form, an inactive hexameric form and higher aggregates. Interconversion between the various forms is largely reversible and is influenced by the natural substrates and inhibitors of the enzyme.</text>
</comment>
<comment type="subcellular location">
    <subcellularLocation>
        <location evidence="1">Cytoplasm</location>
    </subcellularLocation>
</comment>
<comment type="similarity">
    <text evidence="1">Belongs to the ATP phosphoribosyltransferase family. Long subfamily.</text>
</comment>
<feature type="chain" id="PRO_0000151877" description="ATP phosphoribosyltransferase">
    <location>
        <begin position="1"/>
        <end position="299"/>
    </location>
</feature>